<comment type="function">
    <text evidence="1">Removes the 2'-phosphate from RNA via an intermediate in which the phosphate is ADP-ribosylated by NAD followed by a presumed transesterification to release the RNA and generate ADP-ribose 1''-2''-cyclic phosphate (APPR&gt;P). May function as an ADP-ribosylase (By similarity).</text>
</comment>
<comment type="similarity">
    <text evidence="2">Belongs to the KptA/TPT1 family.</text>
</comment>
<sequence length="183" mass="21501">MGKAQSVRFKVSKLMAYILRHDPWSFNLQPDEEGFVDLEEFVNAIRRVYPWVTKEFILDIVERDEKERYEVKEGKIRARYGHSYPVILDHKEDKESKTLYHGTIRENLEGIMREGIKPMKRQFVHLSLNYEDAYNTGRRHGSNVVVLMIDADCLRKKGFKILKAGKKVRIVKYVPVDCIVGEL</sequence>
<keyword id="KW-0520">NAD</keyword>
<keyword id="KW-0808">Transferase</keyword>
<evidence type="ECO:0000250" key="1"/>
<evidence type="ECO:0000305" key="2"/>
<name>KPTA_PYRAB</name>
<reference key="1">
    <citation type="journal article" date="2003" name="Mol. Microbiol.">
        <title>An integrated analysis of the genome of the hyperthermophilic archaeon Pyrococcus abyssi.</title>
        <authorList>
            <person name="Cohen G.N."/>
            <person name="Barbe V."/>
            <person name="Flament D."/>
            <person name="Galperin M."/>
            <person name="Heilig R."/>
            <person name="Lecompte O."/>
            <person name="Poch O."/>
            <person name="Prieur D."/>
            <person name="Querellou J."/>
            <person name="Ripp R."/>
            <person name="Thierry J.-C."/>
            <person name="Van der Oost J."/>
            <person name="Weissenbach J."/>
            <person name="Zivanovic Y."/>
            <person name="Forterre P."/>
        </authorList>
    </citation>
    <scope>NUCLEOTIDE SEQUENCE [LARGE SCALE GENOMIC DNA]</scope>
    <source>
        <strain>GE5 / Orsay</strain>
    </source>
</reference>
<reference key="2">
    <citation type="journal article" date="2012" name="Curr. Microbiol.">
        <title>Re-annotation of two hyperthermophilic archaea Pyrococcus abyssi GE5 and Pyrococcus furiosus DSM 3638.</title>
        <authorList>
            <person name="Gao J."/>
            <person name="Wang J."/>
        </authorList>
    </citation>
    <scope>GENOME REANNOTATION</scope>
    <source>
        <strain>GE5 / Orsay</strain>
    </source>
</reference>
<organism>
    <name type="scientific">Pyrococcus abyssi (strain GE5 / Orsay)</name>
    <dbReference type="NCBI Taxonomy" id="272844"/>
    <lineage>
        <taxon>Archaea</taxon>
        <taxon>Methanobacteriati</taxon>
        <taxon>Methanobacteriota</taxon>
        <taxon>Thermococci</taxon>
        <taxon>Thermococcales</taxon>
        <taxon>Thermococcaceae</taxon>
        <taxon>Pyrococcus</taxon>
    </lineage>
</organism>
<gene>
    <name type="primary">kptA</name>
    <name type="ordered locus">PYRAB01570</name>
    <name type="ORF">PAB2247</name>
</gene>
<dbReference type="EC" id="2.7.1.-"/>
<dbReference type="EMBL" id="AJ248283">
    <property type="protein sequence ID" value="CAB49081.1"/>
    <property type="molecule type" value="Genomic_DNA"/>
</dbReference>
<dbReference type="EMBL" id="HE613800">
    <property type="protein sequence ID" value="CCE69533.1"/>
    <property type="molecule type" value="Genomic_DNA"/>
</dbReference>
<dbReference type="PIR" id="B75204">
    <property type="entry name" value="B75204"/>
</dbReference>
<dbReference type="RefSeq" id="WP_010867281.1">
    <property type="nucleotide sequence ID" value="NC_000868.1"/>
</dbReference>
<dbReference type="SMR" id="Q9V2B7"/>
<dbReference type="STRING" id="272844.PAB2247"/>
<dbReference type="KEGG" id="pab:PAB2247"/>
<dbReference type="PATRIC" id="fig|272844.11.peg.170"/>
<dbReference type="eggNOG" id="arCOG04063">
    <property type="taxonomic scope" value="Archaea"/>
</dbReference>
<dbReference type="HOGENOM" id="CLU_052998_4_1_2"/>
<dbReference type="PhylomeDB" id="Q9V2B7"/>
<dbReference type="Proteomes" id="UP000000810">
    <property type="component" value="Chromosome"/>
</dbReference>
<dbReference type="Proteomes" id="UP000009139">
    <property type="component" value="Chromosome"/>
</dbReference>
<dbReference type="GO" id="GO:0003950">
    <property type="term" value="F:NAD+ poly-ADP-ribosyltransferase activity"/>
    <property type="evidence" value="ECO:0007669"/>
    <property type="project" value="InterPro"/>
</dbReference>
<dbReference type="GO" id="GO:0000215">
    <property type="term" value="F:tRNA 2'-phosphotransferase activity"/>
    <property type="evidence" value="ECO:0007669"/>
    <property type="project" value="TreeGrafter"/>
</dbReference>
<dbReference type="GO" id="GO:0006388">
    <property type="term" value="P:tRNA splicing, via endonucleolytic cleavage and ligation"/>
    <property type="evidence" value="ECO:0007669"/>
    <property type="project" value="UniProtKB-UniRule"/>
</dbReference>
<dbReference type="Gene3D" id="3.20.170.30">
    <property type="match status" value="1"/>
</dbReference>
<dbReference type="Gene3D" id="1.10.10.970">
    <property type="entry name" value="RNA 2'-phosphotransferase, Tpt1/KptA family, N-terminal domain"/>
    <property type="match status" value="1"/>
</dbReference>
<dbReference type="HAMAP" id="MF_00299">
    <property type="entry name" value="KptA"/>
    <property type="match status" value="1"/>
</dbReference>
<dbReference type="InterPro" id="IPR002745">
    <property type="entry name" value="Ptrans_KptA/Tpt1"/>
</dbReference>
<dbReference type="InterPro" id="IPR042081">
    <property type="entry name" value="RNA_2'-PTrans_C"/>
</dbReference>
<dbReference type="InterPro" id="IPR022928">
    <property type="entry name" value="RNA_2'-PTrans_KptA"/>
</dbReference>
<dbReference type="InterPro" id="IPR042080">
    <property type="entry name" value="RNA_2'-PTrans_N"/>
</dbReference>
<dbReference type="NCBIfam" id="NF002013">
    <property type="entry name" value="PRK00819.1-2"/>
    <property type="match status" value="1"/>
</dbReference>
<dbReference type="PANTHER" id="PTHR12684">
    <property type="entry name" value="PUTATIVE PHOSPHOTRANSFERASE"/>
    <property type="match status" value="1"/>
</dbReference>
<dbReference type="PANTHER" id="PTHR12684:SF2">
    <property type="entry name" value="TRNA 2'-PHOSPHOTRANSFERASE 1"/>
    <property type="match status" value="1"/>
</dbReference>
<dbReference type="Pfam" id="PF01885">
    <property type="entry name" value="PTS_2-RNA"/>
    <property type="match status" value="1"/>
</dbReference>
<dbReference type="SUPFAM" id="SSF56399">
    <property type="entry name" value="ADP-ribosylation"/>
    <property type="match status" value="1"/>
</dbReference>
<protein>
    <recommendedName>
        <fullName>Probable RNA 2'-phosphotransferase</fullName>
        <ecNumber>2.7.1.-</ecNumber>
    </recommendedName>
</protein>
<accession>Q9V2B7</accession>
<accession>G8ZFZ2</accession>
<feature type="chain" id="PRO_0000157490" description="Probable RNA 2'-phosphotransferase">
    <location>
        <begin position="1"/>
        <end position="183"/>
    </location>
</feature>
<proteinExistence type="inferred from homology"/>